<sequence length="332" mass="36841">MREDTKVYDITIIGGGPVGLFTAFYGGMRQASVKIIESLPQLGGQLSALYPEKYIYDVAGFPKIRAQELINNLKEQMAKFDQTICLEQAVESVEKQADGVFKLVTNEETHYSKTVIITAGNGAFKPRKLELENAEQYEGKNLHYFVDDLQKFAGRRVAILGGGDSAVDWALMLEPIAKEVSIIHRRDKFRAHEHSVENLHASKVNVLTPFVPAELIGEDKIEQLVLEEVKGDRKEILEIDDLIVNYGFVSSLGPIKNWGLDIEKNSIVVKSTMETNIEGFFAAGDICTYEGKVNLIASGFGEAPTAVNNAKAYMDPKARVQPLHSTSLFENK</sequence>
<dbReference type="EC" id="1.18.1.2"/>
<dbReference type="EMBL" id="Z93939">
    <property type="protein sequence ID" value="CAB07954.1"/>
    <property type="molecule type" value="Genomic_DNA"/>
</dbReference>
<dbReference type="EMBL" id="AL009126">
    <property type="protein sequence ID" value="CAB15201.2"/>
    <property type="molecule type" value="Genomic_DNA"/>
</dbReference>
<dbReference type="PIR" id="B70015">
    <property type="entry name" value="B70015"/>
</dbReference>
<dbReference type="RefSeq" id="WP_003220618.1">
    <property type="nucleotide sequence ID" value="NZ_OZ025638.1"/>
</dbReference>
<dbReference type="PDB" id="3LZW">
    <property type="method" value="X-ray"/>
    <property type="resolution" value="1.80 A"/>
    <property type="chains" value="A=1-332"/>
</dbReference>
<dbReference type="PDB" id="3LZX">
    <property type="method" value="X-ray"/>
    <property type="resolution" value="1.90 A"/>
    <property type="chains" value="A/B=1-332"/>
</dbReference>
<dbReference type="PDBsum" id="3LZW"/>
<dbReference type="PDBsum" id="3LZX"/>
<dbReference type="SMR" id="O05268"/>
<dbReference type="FunCoup" id="O05268">
    <property type="interactions" value="42"/>
</dbReference>
<dbReference type="IntAct" id="O05268">
    <property type="interactions" value="1"/>
</dbReference>
<dbReference type="MINT" id="O05268"/>
<dbReference type="STRING" id="224308.BSU32110"/>
<dbReference type="jPOST" id="O05268"/>
<dbReference type="PaxDb" id="224308-BSU32110"/>
<dbReference type="EnsemblBacteria" id="CAB15201">
    <property type="protein sequence ID" value="CAB15201"/>
    <property type="gene ID" value="BSU_32110"/>
</dbReference>
<dbReference type="GeneID" id="86872251"/>
<dbReference type="GeneID" id="936577"/>
<dbReference type="KEGG" id="bsu:BSU32110"/>
<dbReference type="PATRIC" id="fig|224308.179.peg.3477"/>
<dbReference type="eggNOG" id="COG0492">
    <property type="taxonomic scope" value="Bacteria"/>
</dbReference>
<dbReference type="InParanoid" id="O05268"/>
<dbReference type="OrthoDB" id="9806179at2"/>
<dbReference type="PhylomeDB" id="O05268"/>
<dbReference type="BioCyc" id="BSUB:BSU32110-MONOMER"/>
<dbReference type="BRENDA" id="1.14.14.47">
    <property type="organism ID" value="9933"/>
</dbReference>
<dbReference type="BRENDA" id="1.18.1.2">
    <property type="organism ID" value="658"/>
</dbReference>
<dbReference type="BRENDA" id="1.19.1.1">
    <property type="organism ID" value="658"/>
</dbReference>
<dbReference type="SABIO-RK" id="O05268"/>
<dbReference type="EvolutionaryTrace" id="O05268"/>
<dbReference type="PRO" id="PR:O05268"/>
<dbReference type="Proteomes" id="UP000001570">
    <property type="component" value="Chromosome"/>
</dbReference>
<dbReference type="GO" id="GO:0004324">
    <property type="term" value="F:ferredoxin-NADP+ reductase activity"/>
    <property type="evidence" value="ECO:0007669"/>
    <property type="project" value="UniProtKB-UniRule"/>
</dbReference>
<dbReference type="GO" id="GO:0050660">
    <property type="term" value="F:flavin adenine dinucleotide binding"/>
    <property type="evidence" value="ECO:0007669"/>
    <property type="project" value="UniProtKB-UniRule"/>
</dbReference>
<dbReference type="GO" id="GO:0050661">
    <property type="term" value="F:NADP binding"/>
    <property type="evidence" value="ECO:0007669"/>
    <property type="project" value="UniProtKB-UniRule"/>
</dbReference>
<dbReference type="GO" id="GO:0004791">
    <property type="term" value="F:thioredoxin-disulfide reductase (NADPH) activity"/>
    <property type="evidence" value="ECO:0000318"/>
    <property type="project" value="GO_Central"/>
</dbReference>
<dbReference type="GO" id="GO:0045454">
    <property type="term" value="P:cell redox homeostasis"/>
    <property type="evidence" value="ECO:0000318"/>
    <property type="project" value="GO_Central"/>
</dbReference>
<dbReference type="Gene3D" id="3.50.50.60">
    <property type="entry name" value="FAD/NAD(P)-binding domain"/>
    <property type="match status" value="2"/>
</dbReference>
<dbReference type="HAMAP" id="MF_01685">
    <property type="entry name" value="FENR2"/>
    <property type="match status" value="1"/>
</dbReference>
<dbReference type="InterPro" id="IPR036188">
    <property type="entry name" value="FAD/NAD-bd_sf"/>
</dbReference>
<dbReference type="InterPro" id="IPR023753">
    <property type="entry name" value="FAD/NAD-binding_dom"/>
</dbReference>
<dbReference type="InterPro" id="IPR022890">
    <property type="entry name" value="Fd--NADP_Rdtase_type_2"/>
</dbReference>
<dbReference type="InterPro" id="IPR050097">
    <property type="entry name" value="Ferredoxin-NADP_redctase_2"/>
</dbReference>
<dbReference type="PANTHER" id="PTHR48105">
    <property type="entry name" value="THIOREDOXIN REDUCTASE 1-RELATED-RELATED"/>
    <property type="match status" value="1"/>
</dbReference>
<dbReference type="Pfam" id="PF07992">
    <property type="entry name" value="Pyr_redox_2"/>
    <property type="match status" value="1"/>
</dbReference>
<dbReference type="PRINTS" id="PR00368">
    <property type="entry name" value="FADPNR"/>
</dbReference>
<dbReference type="PRINTS" id="PR00469">
    <property type="entry name" value="PNDRDTASEII"/>
</dbReference>
<dbReference type="SUPFAM" id="SSF51905">
    <property type="entry name" value="FAD/NAD(P)-binding domain"/>
    <property type="match status" value="1"/>
</dbReference>
<name>FENR2_BACSU</name>
<feature type="chain" id="PRO_0000360548" description="Ferredoxin--NADP reductase 2">
    <location>
        <begin position="1"/>
        <end position="332"/>
    </location>
</feature>
<feature type="binding site" evidence="1">
    <location>
        <position position="37"/>
    </location>
    <ligand>
        <name>FAD</name>
        <dbReference type="ChEBI" id="CHEBI:57692"/>
    </ligand>
</feature>
<feature type="binding site" evidence="1">
    <location>
        <position position="45"/>
    </location>
    <ligand>
        <name>FAD</name>
        <dbReference type="ChEBI" id="CHEBI:57692"/>
    </ligand>
</feature>
<feature type="binding site" evidence="1">
    <location>
        <position position="50"/>
    </location>
    <ligand>
        <name>FAD</name>
        <dbReference type="ChEBI" id="CHEBI:57692"/>
    </ligand>
</feature>
<feature type="binding site" evidence="1">
    <location>
        <position position="90"/>
    </location>
    <ligand>
        <name>FAD</name>
        <dbReference type="ChEBI" id="CHEBI:57692"/>
    </ligand>
</feature>
<feature type="binding site" evidence="1">
    <location>
        <position position="124"/>
    </location>
    <ligand>
        <name>FAD</name>
        <dbReference type="ChEBI" id="CHEBI:57692"/>
    </ligand>
</feature>
<feature type="binding site" evidence="1">
    <location>
        <position position="285"/>
    </location>
    <ligand>
        <name>FAD</name>
        <dbReference type="ChEBI" id="CHEBI:57692"/>
    </ligand>
</feature>
<feature type="binding site" evidence="1">
    <location>
        <position position="326"/>
    </location>
    <ligand>
        <name>FAD</name>
        <dbReference type="ChEBI" id="CHEBI:57692"/>
    </ligand>
</feature>
<feature type="sequence conflict" description="In Ref. 1; CAB07954." evidence="3" ref="1">
    <original>TNEETHYSKTVI</original>
    <variation>QMKKPTTLKRSC</variation>
    <location>
        <begin position="105"/>
        <end position="116"/>
    </location>
</feature>
<feature type="strand" evidence="4">
    <location>
        <begin position="2"/>
        <end position="13"/>
    </location>
</feature>
<feature type="helix" evidence="4">
    <location>
        <begin position="17"/>
        <end position="28"/>
    </location>
</feature>
<feature type="strand" evidence="4">
    <location>
        <begin position="33"/>
        <end position="36"/>
    </location>
</feature>
<feature type="strand" evidence="4">
    <location>
        <begin position="38"/>
        <end position="42"/>
    </location>
</feature>
<feature type="helix" evidence="4">
    <location>
        <begin position="44"/>
        <end position="49"/>
    </location>
</feature>
<feature type="strand" evidence="4">
    <location>
        <begin position="53"/>
        <end position="55"/>
    </location>
</feature>
<feature type="strand" evidence="4">
    <location>
        <begin position="62"/>
        <end position="65"/>
    </location>
</feature>
<feature type="helix" evidence="4">
    <location>
        <begin position="66"/>
        <end position="77"/>
    </location>
</feature>
<feature type="strand" evidence="4">
    <location>
        <begin position="83"/>
        <end position="85"/>
    </location>
</feature>
<feature type="strand" evidence="4">
    <location>
        <begin position="90"/>
        <end position="95"/>
    </location>
</feature>
<feature type="strand" evidence="4">
    <location>
        <begin position="101"/>
        <end position="117"/>
    </location>
</feature>
<feature type="strand" evidence="5">
    <location>
        <begin position="122"/>
        <end position="126"/>
    </location>
</feature>
<feature type="helix" evidence="4">
    <location>
        <begin position="134"/>
        <end position="137"/>
    </location>
</feature>
<feature type="turn" evidence="4">
    <location>
        <begin position="139"/>
        <end position="141"/>
    </location>
</feature>
<feature type="strand" evidence="4">
    <location>
        <begin position="142"/>
        <end position="145"/>
    </location>
</feature>
<feature type="helix" evidence="4">
    <location>
        <begin position="149"/>
        <end position="152"/>
    </location>
</feature>
<feature type="strand" evidence="4">
    <location>
        <begin position="156"/>
        <end position="160"/>
    </location>
</feature>
<feature type="helix" evidence="4">
    <location>
        <begin position="164"/>
        <end position="173"/>
    </location>
</feature>
<feature type="turn" evidence="4">
    <location>
        <begin position="174"/>
        <end position="176"/>
    </location>
</feature>
<feature type="strand" evidence="4">
    <location>
        <begin position="177"/>
        <end position="183"/>
    </location>
</feature>
<feature type="strand" evidence="4">
    <location>
        <begin position="185"/>
        <end position="188"/>
    </location>
</feature>
<feature type="helix" evidence="4">
    <location>
        <begin position="193"/>
        <end position="201"/>
    </location>
</feature>
<feature type="strand" evidence="4">
    <location>
        <begin position="205"/>
        <end position="207"/>
    </location>
</feature>
<feature type="strand" evidence="4">
    <location>
        <begin position="210"/>
        <end position="216"/>
    </location>
</feature>
<feature type="strand" evidence="4">
    <location>
        <begin position="218"/>
        <end position="220"/>
    </location>
</feature>
<feature type="strand" evidence="4">
    <location>
        <begin position="223"/>
        <end position="228"/>
    </location>
</feature>
<feature type="strand" evidence="4">
    <location>
        <begin position="234"/>
        <end position="238"/>
    </location>
</feature>
<feature type="strand" evidence="4">
    <location>
        <begin position="240"/>
        <end position="244"/>
    </location>
</feature>
<feature type="strand" evidence="5">
    <location>
        <begin position="248"/>
        <end position="251"/>
    </location>
</feature>
<feature type="helix" evidence="4">
    <location>
        <begin position="253"/>
        <end position="257"/>
    </location>
</feature>
<feature type="strand" evidence="4">
    <location>
        <begin position="266"/>
        <end position="268"/>
    </location>
</feature>
<feature type="strand" evidence="4">
    <location>
        <begin position="280"/>
        <end position="282"/>
    </location>
</feature>
<feature type="helix" evidence="4">
    <location>
        <begin position="284"/>
        <end position="286"/>
    </location>
</feature>
<feature type="helix" evidence="4">
    <location>
        <begin position="296"/>
        <end position="314"/>
    </location>
</feature>
<feature type="helix" evidence="4">
    <location>
        <begin position="325"/>
        <end position="328"/>
    </location>
</feature>
<organism>
    <name type="scientific">Bacillus subtilis (strain 168)</name>
    <dbReference type="NCBI Taxonomy" id="224308"/>
    <lineage>
        <taxon>Bacteria</taxon>
        <taxon>Bacillati</taxon>
        <taxon>Bacillota</taxon>
        <taxon>Bacilli</taxon>
        <taxon>Bacillales</taxon>
        <taxon>Bacillaceae</taxon>
        <taxon>Bacillus</taxon>
    </lineage>
</organism>
<keyword id="KW-0002">3D-structure</keyword>
<keyword id="KW-0903">Direct protein sequencing</keyword>
<keyword id="KW-0274">FAD</keyword>
<keyword id="KW-0285">Flavoprotein</keyword>
<keyword id="KW-0521">NADP</keyword>
<keyword id="KW-0560">Oxidoreductase</keyword>
<keyword id="KW-1185">Reference proteome</keyword>
<accession>O05268</accession>
<accession>Q795K8</accession>
<gene>
    <name type="primary">yumC</name>
    <name type="ordered locus">BSU32110</name>
</gene>
<proteinExistence type="evidence at protein level"/>
<comment type="catalytic activity">
    <reaction evidence="2">
        <text>2 reduced [2Fe-2S]-[ferredoxin] + NADP(+) + H(+) = 2 oxidized [2Fe-2S]-[ferredoxin] + NADPH</text>
        <dbReference type="Rhea" id="RHEA:20125"/>
        <dbReference type="Rhea" id="RHEA-COMP:10000"/>
        <dbReference type="Rhea" id="RHEA-COMP:10001"/>
        <dbReference type="ChEBI" id="CHEBI:15378"/>
        <dbReference type="ChEBI" id="CHEBI:33737"/>
        <dbReference type="ChEBI" id="CHEBI:33738"/>
        <dbReference type="ChEBI" id="CHEBI:57783"/>
        <dbReference type="ChEBI" id="CHEBI:58349"/>
        <dbReference type="EC" id="1.18.1.2"/>
    </reaction>
</comment>
<comment type="cofactor">
    <cofactor evidence="2">
        <name>FAD</name>
        <dbReference type="ChEBI" id="CHEBI:57692"/>
    </cofactor>
    <text evidence="2">Binds 1 FAD per subunit.</text>
</comment>
<comment type="biophysicochemical properties">
    <kinetics>
        <KM evidence="2">0.54 uM for NADPH (at 24 degrees Celsius and pH 7.0)</KM>
        <text>KM for NADH is &lt; 0.1 uM.</text>
    </kinetics>
</comment>
<comment type="subunit">
    <text evidence="2">Homodimer.</text>
</comment>
<comment type="similarity">
    <text evidence="3">Belongs to the ferredoxin--NADP reductase type 2 family.</text>
</comment>
<protein>
    <recommendedName>
        <fullName>Ferredoxin--NADP reductase 2</fullName>
        <shortName>FNR 2</shortName>
        <shortName>Fd-NADP(+) reductase 2</shortName>
        <ecNumber>1.18.1.2</ecNumber>
    </recommendedName>
</protein>
<evidence type="ECO:0000250" key="1"/>
<evidence type="ECO:0000269" key="2">
    <source>
    </source>
</evidence>
<evidence type="ECO:0000305" key="3"/>
<evidence type="ECO:0007829" key="4">
    <source>
        <dbReference type="PDB" id="3LZW"/>
    </source>
</evidence>
<evidence type="ECO:0007829" key="5">
    <source>
        <dbReference type="PDB" id="3LZX"/>
    </source>
</evidence>
<reference key="1">
    <citation type="submission" date="1997-04" db="EMBL/GenBank/DDBJ databases">
        <title>Bacillus genome sequence project: sequence of yumA to pai; a segment of the bacillus genome at about 284 degrees.</title>
        <authorList>
            <person name="Oudega B."/>
            <person name="Koningsteyn G."/>
            <person name="Ramon-De Haan M."/>
            <person name="Rodrigues L."/>
        </authorList>
    </citation>
    <scope>NUCLEOTIDE SEQUENCE [GENOMIC DNA]</scope>
    <source>
        <strain>168</strain>
    </source>
</reference>
<reference key="2">
    <citation type="journal article" date="1997" name="Nature">
        <title>The complete genome sequence of the Gram-positive bacterium Bacillus subtilis.</title>
        <authorList>
            <person name="Kunst F."/>
            <person name="Ogasawara N."/>
            <person name="Moszer I."/>
            <person name="Albertini A.M."/>
            <person name="Alloni G."/>
            <person name="Azevedo V."/>
            <person name="Bertero M.G."/>
            <person name="Bessieres P."/>
            <person name="Bolotin A."/>
            <person name="Borchert S."/>
            <person name="Borriss R."/>
            <person name="Boursier L."/>
            <person name="Brans A."/>
            <person name="Braun M."/>
            <person name="Brignell S.C."/>
            <person name="Bron S."/>
            <person name="Brouillet S."/>
            <person name="Bruschi C.V."/>
            <person name="Caldwell B."/>
            <person name="Capuano V."/>
            <person name="Carter N.M."/>
            <person name="Choi S.-K."/>
            <person name="Codani J.-J."/>
            <person name="Connerton I.F."/>
            <person name="Cummings N.J."/>
            <person name="Daniel R.A."/>
            <person name="Denizot F."/>
            <person name="Devine K.M."/>
            <person name="Duesterhoeft A."/>
            <person name="Ehrlich S.D."/>
            <person name="Emmerson P.T."/>
            <person name="Entian K.-D."/>
            <person name="Errington J."/>
            <person name="Fabret C."/>
            <person name="Ferrari E."/>
            <person name="Foulger D."/>
            <person name="Fritz C."/>
            <person name="Fujita M."/>
            <person name="Fujita Y."/>
            <person name="Fuma S."/>
            <person name="Galizzi A."/>
            <person name="Galleron N."/>
            <person name="Ghim S.-Y."/>
            <person name="Glaser P."/>
            <person name="Goffeau A."/>
            <person name="Golightly E.J."/>
            <person name="Grandi G."/>
            <person name="Guiseppi G."/>
            <person name="Guy B.J."/>
            <person name="Haga K."/>
            <person name="Haiech J."/>
            <person name="Harwood C.R."/>
            <person name="Henaut A."/>
            <person name="Hilbert H."/>
            <person name="Holsappel S."/>
            <person name="Hosono S."/>
            <person name="Hullo M.-F."/>
            <person name="Itaya M."/>
            <person name="Jones L.-M."/>
            <person name="Joris B."/>
            <person name="Karamata D."/>
            <person name="Kasahara Y."/>
            <person name="Klaerr-Blanchard M."/>
            <person name="Klein C."/>
            <person name="Kobayashi Y."/>
            <person name="Koetter P."/>
            <person name="Koningstein G."/>
            <person name="Krogh S."/>
            <person name="Kumano M."/>
            <person name="Kurita K."/>
            <person name="Lapidus A."/>
            <person name="Lardinois S."/>
            <person name="Lauber J."/>
            <person name="Lazarevic V."/>
            <person name="Lee S.-M."/>
            <person name="Levine A."/>
            <person name="Liu H."/>
            <person name="Masuda S."/>
            <person name="Mauel C."/>
            <person name="Medigue C."/>
            <person name="Medina N."/>
            <person name="Mellado R.P."/>
            <person name="Mizuno M."/>
            <person name="Moestl D."/>
            <person name="Nakai S."/>
            <person name="Noback M."/>
            <person name="Noone D."/>
            <person name="O'Reilly M."/>
            <person name="Ogawa K."/>
            <person name="Ogiwara A."/>
            <person name="Oudega B."/>
            <person name="Park S.-H."/>
            <person name="Parro V."/>
            <person name="Pohl T.M."/>
            <person name="Portetelle D."/>
            <person name="Porwollik S."/>
            <person name="Prescott A.M."/>
            <person name="Presecan E."/>
            <person name="Pujic P."/>
            <person name="Purnelle B."/>
            <person name="Rapoport G."/>
            <person name="Rey M."/>
            <person name="Reynolds S."/>
            <person name="Rieger M."/>
            <person name="Rivolta C."/>
            <person name="Rocha E."/>
            <person name="Roche B."/>
            <person name="Rose M."/>
            <person name="Sadaie Y."/>
            <person name="Sato T."/>
            <person name="Scanlan E."/>
            <person name="Schleich S."/>
            <person name="Schroeter R."/>
            <person name="Scoffone F."/>
            <person name="Sekiguchi J."/>
            <person name="Sekowska A."/>
            <person name="Seror S.J."/>
            <person name="Serror P."/>
            <person name="Shin B.-S."/>
            <person name="Soldo B."/>
            <person name="Sorokin A."/>
            <person name="Tacconi E."/>
            <person name="Takagi T."/>
            <person name="Takahashi H."/>
            <person name="Takemaru K."/>
            <person name="Takeuchi M."/>
            <person name="Tamakoshi A."/>
            <person name="Tanaka T."/>
            <person name="Terpstra P."/>
            <person name="Tognoni A."/>
            <person name="Tosato V."/>
            <person name="Uchiyama S."/>
            <person name="Vandenbol M."/>
            <person name="Vannier F."/>
            <person name="Vassarotti A."/>
            <person name="Viari A."/>
            <person name="Wambutt R."/>
            <person name="Wedler E."/>
            <person name="Wedler H."/>
            <person name="Weitzenegger T."/>
            <person name="Winters P."/>
            <person name="Wipat A."/>
            <person name="Yamamoto H."/>
            <person name="Yamane K."/>
            <person name="Yasumoto K."/>
            <person name="Yata K."/>
            <person name="Yoshida K."/>
            <person name="Yoshikawa H.-F."/>
            <person name="Zumstein E."/>
            <person name="Yoshikawa H."/>
            <person name="Danchin A."/>
        </authorList>
    </citation>
    <scope>NUCLEOTIDE SEQUENCE [LARGE SCALE GENOMIC DNA]</scope>
    <source>
        <strain>168</strain>
    </source>
</reference>
<reference key="3">
    <citation type="journal article" date="2009" name="Microbiology">
        <title>From a consortium sequence to a unified sequence: the Bacillus subtilis 168 reference genome a decade later.</title>
        <authorList>
            <person name="Barbe V."/>
            <person name="Cruveiller S."/>
            <person name="Kunst F."/>
            <person name="Lenoble P."/>
            <person name="Meurice G."/>
            <person name="Sekowska A."/>
            <person name="Vallenet D."/>
            <person name="Wang T."/>
            <person name="Moszer I."/>
            <person name="Medigue C."/>
            <person name="Danchin A."/>
        </authorList>
    </citation>
    <scope>SEQUENCE REVISION TO 105-116</scope>
</reference>
<reference key="4">
    <citation type="journal article" date="2004" name="Arch. Microbiol.">
        <title>Purification and characterization of ferredoxin-NADP+ reductase encoded by Bacillus subtilis yumC.</title>
        <authorList>
            <person name="Seo D."/>
            <person name="Kamino K."/>
            <person name="Inoue K."/>
            <person name="Sakurai H."/>
        </authorList>
    </citation>
    <scope>PROTEIN SEQUENCE OF 1-17</scope>
    <scope>BIOPHYSICOCHEMICAL PROPERTIES</scope>
    <scope>CATALYTIC ACTIVITY</scope>
    <scope>SUBUNIT</scope>
    <scope>COFACTOR</scope>
</reference>